<feature type="peptide" id="PRO_0000044402" description="Kassinin-like peptide K-III">
    <location>
        <begin position="1"/>
        <end position="11"/>
    </location>
</feature>
<feature type="modified residue" description="Pyrrolidone carboxylic acid" evidence="1">
    <location>
        <position position="1"/>
    </location>
</feature>
<feature type="modified residue" description="Methionine amide" evidence="1">
    <location>
        <position position="11"/>
    </location>
</feature>
<proteinExistence type="evidence at protein level"/>
<sequence>QPHPNEFVGLM</sequence>
<protein>
    <recommendedName>
        <fullName>Kassinin-like peptide K-III</fullName>
    </recommendedName>
    <alternativeName>
        <fullName>PG-KIII</fullName>
    </alternativeName>
</protein>
<name>TKN3_PSEGU</name>
<reference key="1">
    <citation type="journal article" date="1990" name="Peptides">
        <title>Six novel tachykinin- and bombesin-related peptides from the skin of the Australian frog Pseudophryne guntheri.</title>
        <authorList>
            <person name="Simmaco M."/>
            <person name="Severini C."/>
            <person name="de Biase D."/>
            <person name="Barra D."/>
            <person name="Bossa F."/>
            <person name="Roberts J.D."/>
            <person name="Melchiorri P."/>
            <person name="Erspamer V."/>
        </authorList>
    </citation>
    <scope>PROTEIN SEQUENCE</scope>
    <scope>PYROGLUTAMATE FORMATION AT GLN-1</scope>
    <scope>AMIDATION AT MET-11</scope>
    <source>
        <tissue>Skin secretion</tissue>
    </source>
</reference>
<keyword id="KW-0027">Amidation</keyword>
<keyword id="KW-0878">Amphibian defense peptide</keyword>
<keyword id="KW-0903">Direct protein sequencing</keyword>
<keyword id="KW-0527">Neuropeptide</keyword>
<keyword id="KW-0873">Pyrrolidone carboxylic acid</keyword>
<keyword id="KW-0964">Secreted</keyword>
<evidence type="ECO:0000269" key="1">
    <source>
    </source>
</evidence>
<evidence type="ECO:0000305" key="2"/>
<dbReference type="PIR" id="D60409">
    <property type="entry name" value="D60409"/>
</dbReference>
<dbReference type="GO" id="GO:0005576">
    <property type="term" value="C:extracellular region"/>
    <property type="evidence" value="ECO:0007669"/>
    <property type="project" value="UniProtKB-SubCell"/>
</dbReference>
<dbReference type="GO" id="GO:0006952">
    <property type="term" value="P:defense response"/>
    <property type="evidence" value="ECO:0007669"/>
    <property type="project" value="UniProtKB-KW"/>
</dbReference>
<dbReference type="GO" id="GO:0007218">
    <property type="term" value="P:neuropeptide signaling pathway"/>
    <property type="evidence" value="ECO:0007669"/>
    <property type="project" value="UniProtKB-KW"/>
</dbReference>
<dbReference type="GO" id="GO:0007217">
    <property type="term" value="P:tachykinin receptor signaling pathway"/>
    <property type="evidence" value="ECO:0007669"/>
    <property type="project" value="InterPro"/>
</dbReference>
<dbReference type="InterPro" id="IPR013055">
    <property type="entry name" value="Tachy_Neuro_lke_CS"/>
</dbReference>
<dbReference type="InterPro" id="IPR008215">
    <property type="entry name" value="Tachykinin_dom"/>
</dbReference>
<dbReference type="Pfam" id="PF02202">
    <property type="entry name" value="Tachykinin"/>
    <property type="match status" value="1"/>
</dbReference>
<dbReference type="PROSITE" id="PS00267">
    <property type="entry name" value="TACHYKININ"/>
    <property type="match status" value="1"/>
</dbReference>
<accession>P42988</accession>
<comment type="function">
    <text>Tachykinins are active peptides which excite neurons, evoke behavioral responses, are potent vasodilators and secretagogues, and contract (directly or indirectly) many smooth muscles.</text>
</comment>
<comment type="subcellular location">
    <subcellularLocation>
        <location>Secreted</location>
    </subcellularLocation>
</comment>
<comment type="tissue specificity">
    <text>Expressed by the skin glands.</text>
</comment>
<comment type="similarity">
    <text evidence="2">Belongs to the tachykinin family.</text>
</comment>
<organism>
    <name type="scientific">Pseudophryne guentheri</name>
    <name type="common">Guenther's toadlet</name>
    <dbReference type="NCBI Taxonomy" id="30349"/>
    <lineage>
        <taxon>Eukaryota</taxon>
        <taxon>Metazoa</taxon>
        <taxon>Chordata</taxon>
        <taxon>Craniata</taxon>
        <taxon>Vertebrata</taxon>
        <taxon>Euteleostomi</taxon>
        <taxon>Amphibia</taxon>
        <taxon>Batrachia</taxon>
        <taxon>Anura</taxon>
        <taxon>Neobatrachia</taxon>
        <taxon>Myobatrachoidea</taxon>
        <taxon>Myobatrachidae</taxon>
        <taxon>Myobatrachinae</taxon>
        <taxon>Pseudophryne</taxon>
    </lineage>
</organism>